<protein>
    <recommendedName>
        <fullName>Dimethylamine methyltransferase MtbB3</fullName>
        <shortName>DMA methyltransferase 3</shortName>
        <shortName>DMAMT 3</shortName>
        <ecNumber>2.1.1.249</ecNumber>
    </recommendedName>
    <alternativeName>
        <fullName>Dimethylamine--corrinoid protein methyltransferase 3</fullName>
    </alternativeName>
</protein>
<accession>P58972</accession>
<keyword id="KW-0484">Methanogenesis</keyword>
<keyword id="KW-0489">Methyltransferase</keyword>
<keyword id="KW-0669">Pyrrolysine</keyword>
<keyword id="KW-0808">Transferase</keyword>
<reference key="1">
    <citation type="journal article" date="2002" name="J. Mol. Microbiol. Biotechnol.">
        <title>The genome of Methanosarcina mazei: evidence for lateral gene transfer between Bacteria and Archaea.</title>
        <authorList>
            <person name="Deppenmeier U."/>
            <person name="Johann A."/>
            <person name="Hartsch T."/>
            <person name="Merkl R."/>
            <person name="Schmitz R.A."/>
            <person name="Martinez-Arias R."/>
            <person name="Henne A."/>
            <person name="Wiezer A."/>
            <person name="Baeumer S."/>
            <person name="Jacobi C."/>
            <person name="Brueggemann H."/>
            <person name="Lienard T."/>
            <person name="Christmann A."/>
            <person name="Boemecke M."/>
            <person name="Steckel S."/>
            <person name="Bhattacharyya A."/>
            <person name="Lykidis A."/>
            <person name="Overbeek R."/>
            <person name="Klenk H.-P."/>
            <person name="Gunsalus R.P."/>
            <person name="Fritz H.-J."/>
            <person name="Gottschalk G."/>
        </authorList>
    </citation>
    <scope>NUCLEOTIDE SEQUENCE [LARGE SCALE GENOMIC DNA]</scope>
    <source>
        <strain>ATCC BAA-159 / DSM 3647 / Goe1 / Go1 / JCM 11833 / OCM 88</strain>
    </source>
</reference>
<organism>
    <name type="scientific">Methanosarcina mazei (strain ATCC BAA-159 / DSM 3647 / Goe1 / Go1 / JCM 11833 / OCM 88)</name>
    <name type="common">Methanosarcina frisia</name>
    <dbReference type="NCBI Taxonomy" id="192952"/>
    <lineage>
        <taxon>Archaea</taxon>
        <taxon>Methanobacteriati</taxon>
        <taxon>Methanobacteriota</taxon>
        <taxon>Stenosarchaea group</taxon>
        <taxon>Methanomicrobia</taxon>
        <taxon>Methanosarcinales</taxon>
        <taxon>Methanosarcinaceae</taxon>
        <taxon>Methanosarcina</taxon>
    </lineage>
</organism>
<comment type="function">
    <text evidence="1">Catalyzes the transfer of a methyl group from dimethylamine to the corrinoid cofactor of MtbC.</text>
</comment>
<comment type="catalytic activity">
    <reaction>
        <text>Co(I)-[dimethylamine-specific corrinoid protein] + dimethylamine + H(+) = methyl-Co(III)-[dimethylamine-specific corrinoid protein] + methylamine</text>
        <dbReference type="Rhea" id="RHEA:41175"/>
        <dbReference type="Rhea" id="RHEA-COMP:11122"/>
        <dbReference type="Rhea" id="RHEA-COMP:11123"/>
        <dbReference type="ChEBI" id="CHEBI:15378"/>
        <dbReference type="ChEBI" id="CHEBI:58040"/>
        <dbReference type="ChEBI" id="CHEBI:59338"/>
        <dbReference type="ChEBI" id="CHEBI:85033"/>
        <dbReference type="ChEBI" id="CHEBI:85035"/>
        <dbReference type="EC" id="2.1.1.249"/>
    </reaction>
</comment>
<comment type="pathway">
    <text>One-carbon metabolism; methanogenesis from dimethylamine.</text>
</comment>
<comment type="similarity">
    <text evidence="2">Belongs to the dimethylamine methyltransferase family.</text>
</comment>
<comment type="sequence caution" evidence="2">
    <conflict type="erroneous termination">
        <sequence resource="EMBL-CDS" id="AAM31389"/>
    </conflict>
    <text>Truncated C-terminus.</text>
</comment>
<comment type="sequence caution" evidence="2">
    <conflict type="erroneous termination">
        <sequence resource="EMBL-CDS" id="AAM31390"/>
    </conflict>
    <text>Truncated C-terminus.</text>
</comment>
<gene>
    <name type="primary">mtbB3</name>
    <name type="ordered locus">MM_1693/MM_1694</name>
</gene>
<evidence type="ECO:0000250" key="1"/>
<evidence type="ECO:0000305" key="2"/>
<name>MTBB3_METMA</name>
<proteinExistence type="inferred from homology"/>
<feature type="chain" id="PRO_0000216568" description="Dimethylamine methyltransferase MtbB3">
    <location>
        <begin position="1"/>
        <end position="467"/>
    </location>
</feature>
<feature type="non-standard amino acid" description="Pyrrolysine" evidence="1">
    <location>
        <position position="356"/>
    </location>
</feature>
<dbReference type="EC" id="2.1.1.249"/>
<dbReference type="EMBL" id="AE008384">
    <property type="protein sequence ID" value="AAM31389.1"/>
    <property type="status" value="ALT_SEQ"/>
    <property type="molecule type" value="Genomic_DNA"/>
</dbReference>
<dbReference type="EMBL" id="AE008384">
    <property type="protein sequence ID" value="AAM31390.1"/>
    <property type="status" value="ALT_SEQ"/>
    <property type="molecule type" value="Genomic_DNA"/>
</dbReference>
<dbReference type="KEGG" id="mma:MM_1693"/>
<dbReference type="KEGG" id="mma:MM_1694"/>
<dbReference type="PATRIC" id="fig|192952.21.peg.1965"/>
<dbReference type="eggNOG" id="arCOG06710">
    <property type="taxonomic scope" value="Archaea"/>
</dbReference>
<dbReference type="HOGENOM" id="CLU_046512_0_0_2"/>
<dbReference type="UniPathway" id="UPA00644"/>
<dbReference type="Proteomes" id="UP000000595">
    <property type="component" value="Chromosome"/>
</dbReference>
<dbReference type="GO" id="GO:0043791">
    <property type="term" value="F:dimethylamine methyltransferase activity"/>
    <property type="evidence" value="ECO:0007669"/>
    <property type="project" value="UniProtKB-EC"/>
</dbReference>
<dbReference type="GO" id="GO:0015948">
    <property type="term" value="P:methanogenesis"/>
    <property type="evidence" value="ECO:0007669"/>
    <property type="project" value="UniProtKB-KW"/>
</dbReference>
<dbReference type="GO" id="GO:0032259">
    <property type="term" value="P:methylation"/>
    <property type="evidence" value="ECO:0007669"/>
    <property type="project" value="UniProtKB-KW"/>
</dbReference>
<dbReference type="InterPro" id="IPR012653">
    <property type="entry name" value="Dimeth_MeTrfase_MtbB"/>
</dbReference>
<dbReference type="NCBIfam" id="TIGR02368">
    <property type="entry name" value="dimeth_PyL"/>
    <property type="match status" value="1"/>
</dbReference>
<dbReference type="Pfam" id="PF09505">
    <property type="entry name" value="Dimeth_Pyl"/>
    <property type="match status" value="1"/>
</dbReference>
<sequence length="467" mass="50469">MATEYALRMGDGKRIFLTKDKIIEELEAGMANASDLGEIPDLSGDEIDKLAEILMMPGKAVSVEQGMEVPVTHDIGTLRLDGDQGNSGVGIPSSRLVGCMMHERAFGADTMELGHIDYSYKPVKPVVANECQAMEVCQQNMIIPLFYGAMPNMGLYYTPDGPFENPGDLMKAFKIQEAWDSMEHAAAHLTRDTVWVMQKLFASGADGVNFDTTAAAGDADMYGTLHAIEALRKEFPDMYIEAGMAGECVLGMHGNLQYDGVTLAGLWPHQQAPLIAKAGANVFGPVCNTNTSKTSPWNLARAVNFMKAAVQASSIPCHVDMGMGVGGIPMLETPPIDAVTRASKAMVEIAGVDGIOIGVGDPLGMPISHIMASGMTGMRAAGDLVARMQFSKNMKIKEAKEYVAKKLNVETMDLADEYVMRELREELDIGVITSVPGAAKGIAAKMNIEKLLDVKINSCNLFRKQTR</sequence>